<proteinExistence type="inferred from homology"/>
<feature type="chain" id="PRO_1000142548" description="Large ribosomal subunit protein bL25">
    <location>
        <begin position="1"/>
        <end position="204"/>
    </location>
</feature>
<evidence type="ECO:0000255" key="1">
    <source>
        <dbReference type="HAMAP-Rule" id="MF_01334"/>
    </source>
</evidence>
<evidence type="ECO:0000305" key="2"/>
<keyword id="KW-0687">Ribonucleoprotein</keyword>
<keyword id="KW-0689">Ribosomal protein</keyword>
<keyword id="KW-0694">RNA-binding</keyword>
<keyword id="KW-0699">rRNA-binding</keyword>
<sequence length="204" mass="21962">MVDFILNAQVRSDLGKGASRRLRRNAGLVPAVVYGGDKEPQSVTLELREIAKLLENEAAFSHVIALNVGGAKETVLIKALQRHPAKGFVMHADFLRVVADHKLTAHVPLHFINEEVAVGVKQAGGEISHTISEVEVSCLPKDLPEFIEVDMAKVELGQIVHLSDLKAPKGVELVQLAHGNDLAVANIHASRVVKEEGSEEGAAE</sequence>
<protein>
    <recommendedName>
        <fullName evidence="1">Large ribosomal subunit protein bL25</fullName>
    </recommendedName>
    <alternativeName>
        <fullName evidence="2">50S ribosomal protein L25</fullName>
    </alternativeName>
    <alternativeName>
        <fullName evidence="1">General stress protein CTC</fullName>
    </alternativeName>
</protein>
<accession>B7V0L7</accession>
<gene>
    <name evidence="1" type="primary">rplY</name>
    <name evidence="1" type="synonym">ctc</name>
    <name type="ordered locus">PLES_50571</name>
</gene>
<name>RL25_PSEA8</name>
<organism>
    <name type="scientific">Pseudomonas aeruginosa (strain LESB58)</name>
    <dbReference type="NCBI Taxonomy" id="557722"/>
    <lineage>
        <taxon>Bacteria</taxon>
        <taxon>Pseudomonadati</taxon>
        <taxon>Pseudomonadota</taxon>
        <taxon>Gammaproteobacteria</taxon>
        <taxon>Pseudomonadales</taxon>
        <taxon>Pseudomonadaceae</taxon>
        <taxon>Pseudomonas</taxon>
    </lineage>
</organism>
<dbReference type="EMBL" id="FM209186">
    <property type="protein sequence ID" value="CAW29811.1"/>
    <property type="molecule type" value="Genomic_DNA"/>
</dbReference>
<dbReference type="RefSeq" id="WP_003099279.1">
    <property type="nucleotide sequence ID" value="NC_011770.1"/>
</dbReference>
<dbReference type="SMR" id="B7V0L7"/>
<dbReference type="KEGG" id="pag:PLES_50571"/>
<dbReference type="HOGENOM" id="CLU_075939_0_1_6"/>
<dbReference type="GO" id="GO:0022625">
    <property type="term" value="C:cytosolic large ribosomal subunit"/>
    <property type="evidence" value="ECO:0007669"/>
    <property type="project" value="TreeGrafter"/>
</dbReference>
<dbReference type="GO" id="GO:0008097">
    <property type="term" value="F:5S rRNA binding"/>
    <property type="evidence" value="ECO:0007669"/>
    <property type="project" value="InterPro"/>
</dbReference>
<dbReference type="GO" id="GO:0003735">
    <property type="term" value="F:structural constituent of ribosome"/>
    <property type="evidence" value="ECO:0007669"/>
    <property type="project" value="InterPro"/>
</dbReference>
<dbReference type="GO" id="GO:0006412">
    <property type="term" value="P:translation"/>
    <property type="evidence" value="ECO:0007669"/>
    <property type="project" value="UniProtKB-UniRule"/>
</dbReference>
<dbReference type="CDD" id="cd00495">
    <property type="entry name" value="Ribosomal_L25_TL5_CTC"/>
    <property type="match status" value="1"/>
</dbReference>
<dbReference type="FunFam" id="2.170.120.20:FF:000007">
    <property type="entry name" value="50S ribosomal protein L25"/>
    <property type="match status" value="1"/>
</dbReference>
<dbReference type="FunFam" id="2.40.240.10:FF:000022">
    <property type="entry name" value="50S ribosomal protein L25"/>
    <property type="match status" value="1"/>
</dbReference>
<dbReference type="Gene3D" id="2.170.120.20">
    <property type="entry name" value="Ribosomal protein L25, beta domain"/>
    <property type="match status" value="1"/>
</dbReference>
<dbReference type="Gene3D" id="2.40.240.10">
    <property type="entry name" value="Ribosomal Protein L25, Chain P"/>
    <property type="match status" value="1"/>
</dbReference>
<dbReference type="HAMAP" id="MF_01334">
    <property type="entry name" value="Ribosomal_bL25_CTC"/>
    <property type="match status" value="1"/>
</dbReference>
<dbReference type="InterPro" id="IPR020056">
    <property type="entry name" value="Rbsml_bL25/Gln-tRNA_synth_N"/>
</dbReference>
<dbReference type="InterPro" id="IPR011035">
    <property type="entry name" value="Ribosomal_bL25/Gln-tRNA_synth"/>
</dbReference>
<dbReference type="InterPro" id="IPR020057">
    <property type="entry name" value="Ribosomal_bL25_b-dom"/>
</dbReference>
<dbReference type="InterPro" id="IPR037121">
    <property type="entry name" value="Ribosomal_bL25_C"/>
</dbReference>
<dbReference type="InterPro" id="IPR001021">
    <property type="entry name" value="Ribosomal_bL25_long"/>
</dbReference>
<dbReference type="InterPro" id="IPR029751">
    <property type="entry name" value="Ribosomal_L25_dom"/>
</dbReference>
<dbReference type="InterPro" id="IPR020930">
    <property type="entry name" value="Ribosomal_uL5_bac-type"/>
</dbReference>
<dbReference type="NCBIfam" id="TIGR00731">
    <property type="entry name" value="bL25_bact_ctc"/>
    <property type="match status" value="1"/>
</dbReference>
<dbReference type="NCBIfam" id="NF004128">
    <property type="entry name" value="PRK05618.1-2"/>
    <property type="match status" value="1"/>
</dbReference>
<dbReference type="NCBIfam" id="NF004130">
    <property type="entry name" value="PRK05618.1-5"/>
    <property type="match status" value="1"/>
</dbReference>
<dbReference type="NCBIfam" id="NF004612">
    <property type="entry name" value="PRK05943.1"/>
    <property type="match status" value="1"/>
</dbReference>
<dbReference type="PANTHER" id="PTHR33284">
    <property type="entry name" value="RIBOSOMAL PROTEIN L25/GLN-TRNA SYNTHETASE, ANTI-CODON-BINDING DOMAIN-CONTAINING PROTEIN"/>
    <property type="match status" value="1"/>
</dbReference>
<dbReference type="PANTHER" id="PTHR33284:SF1">
    <property type="entry name" value="RIBOSOMAL PROTEIN L25_GLN-TRNA SYNTHETASE, ANTI-CODON-BINDING DOMAIN-CONTAINING PROTEIN"/>
    <property type="match status" value="1"/>
</dbReference>
<dbReference type="Pfam" id="PF01386">
    <property type="entry name" value="Ribosomal_L25p"/>
    <property type="match status" value="1"/>
</dbReference>
<dbReference type="Pfam" id="PF14693">
    <property type="entry name" value="Ribosomal_TL5_C"/>
    <property type="match status" value="1"/>
</dbReference>
<dbReference type="SUPFAM" id="SSF50715">
    <property type="entry name" value="Ribosomal protein L25-like"/>
    <property type="match status" value="1"/>
</dbReference>
<reference key="1">
    <citation type="journal article" date="2009" name="Genome Res.">
        <title>Newly introduced genomic prophage islands are critical determinants of in vivo competitiveness in the Liverpool epidemic strain of Pseudomonas aeruginosa.</title>
        <authorList>
            <person name="Winstanley C."/>
            <person name="Langille M.G.I."/>
            <person name="Fothergill J.L."/>
            <person name="Kukavica-Ibrulj I."/>
            <person name="Paradis-Bleau C."/>
            <person name="Sanschagrin F."/>
            <person name="Thomson N.R."/>
            <person name="Winsor G.L."/>
            <person name="Quail M.A."/>
            <person name="Lennard N."/>
            <person name="Bignell A."/>
            <person name="Clarke L."/>
            <person name="Seeger K."/>
            <person name="Saunders D."/>
            <person name="Harris D."/>
            <person name="Parkhill J."/>
            <person name="Hancock R.E.W."/>
            <person name="Brinkman F.S.L."/>
            <person name="Levesque R.C."/>
        </authorList>
    </citation>
    <scope>NUCLEOTIDE SEQUENCE [LARGE SCALE GENOMIC DNA]</scope>
    <source>
        <strain>LESB58</strain>
    </source>
</reference>
<comment type="function">
    <text evidence="1">This is one of the proteins that binds to the 5S RNA in the ribosome where it forms part of the central protuberance.</text>
</comment>
<comment type="subunit">
    <text evidence="1">Part of the 50S ribosomal subunit; part of the 5S rRNA/L5/L18/L25 subcomplex. Contacts the 5S rRNA. Binds to the 5S rRNA independently of L5 and L18.</text>
</comment>
<comment type="similarity">
    <text evidence="1">Belongs to the bacterial ribosomal protein bL25 family. CTC subfamily.</text>
</comment>